<comment type="function">
    <text evidence="1">IGPS catalyzes the conversion of PRFAR and glutamine to IGP, AICAR and glutamate. The HisF subunit catalyzes the cyclization activity that produces IGP and AICAR from PRFAR using the ammonia provided by the HisH subunit.</text>
</comment>
<comment type="catalytic activity">
    <reaction evidence="1">
        <text>5-[(5-phospho-1-deoxy-D-ribulos-1-ylimino)methylamino]-1-(5-phospho-beta-D-ribosyl)imidazole-4-carboxamide + L-glutamine = D-erythro-1-(imidazol-4-yl)glycerol 3-phosphate + 5-amino-1-(5-phospho-beta-D-ribosyl)imidazole-4-carboxamide + L-glutamate + H(+)</text>
        <dbReference type="Rhea" id="RHEA:24793"/>
        <dbReference type="ChEBI" id="CHEBI:15378"/>
        <dbReference type="ChEBI" id="CHEBI:29985"/>
        <dbReference type="ChEBI" id="CHEBI:58278"/>
        <dbReference type="ChEBI" id="CHEBI:58359"/>
        <dbReference type="ChEBI" id="CHEBI:58475"/>
        <dbReference type="ChEBI" id="CHEBI:58525"/>
        <dbReference type="EC" id="4.3.2.10"/>
    </reaction>
</comment>
<comment type="pathway">
    <text evidence="1">Amino-acid biosynthesis; L-histidine biosynthesis; L-histidine from 5-phospho-alpha-D-ribose 1-diphosphate: step 5/9.</text>
</comment>
<comment type="subunit">
    <text evidence="1">Heterodimer of HisH and HisF.</text>
</comment>
<comment type="subcellular location">
    <subcellularLocation>
        <location evidence="1">Cytoplasm</location>
    </subcellularLocation>
</comment>
<comment type="similarity">
    <text evidence="1">Belongs to the HisA/HisF family.</text>
</comment>
<protein>
    <recommendedName>
        <fullName evidence="1">Imidazole glycerol phosphate synthase subunit HisF</fullName>
        <ecNumber evidence="1">4.3.2.10</ecNumber>
    </recommendedName>
    <alternativeName>
        <fullName evidence="1">IGP synthase cyclase subunit</fullName>
    </alternativeName>
    <alternativeName>
        <fullName evidence="1">IGP synthase subunit HisF</fullName>
    </alternativeName>
    <alternativeName>
        <fullName evidence="1">ImGP synthase subunit HisF</fullName>
        <shortName evidence="1">IGPS subunit HisF</shortName>
    </alternativeName>
</protein>
<accession>B7JA19</accession>
<keyword id="KW-0028">Amino-acid biosynthesis</keyword>
<keyword id="KW-0963">Cytoplasm</keyword>
<keyword id="KW-0368">Histidine biosynthesis</keyword>
<keyword id="KW-0456">Lyase</keyword>
<keyword id="KW-1185">Reference proteome</keyword>
<organism>
    <name type="scientific">Acidithiobacillus ferrooxidans (strain ATCC 23270 / DSM 14882 / CIP 104768 / NCIMB 8455)</name>
    <name type="common">Ferrobacillus ferrooxidans (strain ATCC 23270)</name>
    <dbReference type="NCBI Taxonomy" id="243159"/>
    <lineage>
        <taxon>Bacteria</taxon>
        <taxon>Pseudomonadati</taxon>
        <taxon>Pseudomonadota</taxon>
        <taxon>Acidithiobacillia</taxon>
        <taxon>Acidithiobacillales</taxon>
        <taxon>Acidithiobacillaceae</taxon>
        <taxon>Acidithiobacillus</taxon>
    </lineage>
</organism>
<dbReference type="EC" id="4.3.2.10" evidence="1"/>
<dbReference type="EMBL" id="CP001219">
    <property type="protein sequence ID" value="ACK80201.1"/>
    <property type="molecule type" value="Genomic_DNA"/>
</dbReference>
<dbReference type="SMR" id="B7JA19"/>
<dbReference type="STRING" id="243159.AFE_3046"/>
<dbReference type="PaxDb" id="243159-AFE_3046"/>
<dbReference type="KEGG" id="afr:AFE_3046"/>
<dbReference type="eggNOG" id="COG0107">
    <property type="taxonomic scope" value="Bacteria"/>
</dbReference>
<dbReference type="HOGENOM" id="CLU_048577_4_0_6"/>
<dbReference type="UniPathway" id="UPA00031">
    <property type="reaction ID" value="UER00010"/>
</dbReference>
<dbReference type="Proteomes" id="UP000001362">
    <property type="component" value="Chromosome"/>
</dbReference>
<dbReference type="GO" id="GO:0005737">
    <property type="term" value="C:cytoplasm"/>
    <property type="evidence" value="ECO:0007669"/>
    <property type="project" value="UniProtKB-SubCell"/>
</dbReference>
<dbReference type="GO" id="GO:0000107">
    <property type="term" value="F:imidazoleglycerol-phosphate synthase activity"/>
    <property type="evidence" value="ECO:0007669"/>
    <property type="project" value="UniProtKB-UniRule"/>
</dbReference>
<dbReference type="GO" id="GO:0016829">
    <property type="term" value="F:lyase activity"/>
    <property type="evidence" value="ECO:0007669"/>
    <property type="project" value="UniProtKB-KW"/>
</dbReference>
<dbReference type="GO" id="GO:0000105">
    <property type="term" value="P:L-histidine biosynthetic process"/>
    <property type="evidence" value="ECO:0007669"/>
    <property type="project" value="UniProtKB-UniRule"/>
</dbReference>
<dbReference type="CDD" id="cd04731">
    <property type="entry name" value="HisF"/>
    <property type="match status" value="1"/>
</dbReference>
<dbReference type="FunFam" id="3.20.20.70:FF:000006">
    <property type="entry name" value="Imidazole glycerol phosphate synthase subunit HisF"/>
    <property type="match status" value="1"/>
</dbReference>
<dbReference type="Gene3D" id="3.20.20.70">
    <property type="entry name" value="Aldolase class I"/>
    <property type="match status" value="1"/>
</dbReference>
<dbReference type="HAMAP" id="MF_01013">
    <property type="entry name" value="HisF"/>
    <property type="match status" value="1"/>
</dbReference>
<dbReference type="InterPro" id="IPR013785">
    <property type="entry name" value="Aldolase_TIM"/>
</dbReference>
<dbReference type="InterPro" id="IPR006062">
    <property type="entry name" value="His_biosynth"/>
</dbReference>
<dbReference type="InterPro" id="IPR004651">
    <property type="entry name" value="HisF"/>
</dbReference>
<dbReference type="InterPro" id="IPR050064">
    <property type="entry name" value="IGPS_HisA/HisF"/>
</dbReference>
<dbReference type="InterPro" id="IPR011060">
    <property type="entry name" value="RibuloseP-bd_barrel"/>
</dbReference>
<dbReference type="NCBIfam" id="TIGR00735">
    <property type="entry name" value="hisF"/>
    <property type="match status" value="1"/>
</dbReference>
<dbReference type="PANTHER" id="PTHR21235:SF2">
    <property type="entry name" value="IMIDAZOLE GLYCEROL PHOSPHATE SYNTHASE HISHF"/>
    <property type="match status" value="1"/>
</dbReference>
<dbReference type="PANTHER" id="PTHR21235">
    <property type="entry name" value="IMIDAZOLE GLYCEROL PHOSPHATE SYNTHASE SUBUNIT HISF/H IGP SYNTHASE SUBUNIT HISF/H"/>
    <property type="match status" value="1"/>
</dbReference>
<dbReference type="Pfam" id="PF00977">
    <property type="entry name" value="His_biosynth"/>
    <property type="match status" value="1"/>
</dbReference>
<dbReference type="SUPFAM" id="SSF51366">
    <property type="entry name" value="Ribulose-phoshate binding barrel"/>
    <property type="match status" value="1"/>
</dbReference>
<reference key="1">
    <citation type="journal article" date="2008" name="BMC Genomics">
        <title>Acidithiobacillus ferrooxidans metabolism: from genome sequence to industrial applications.</title>
        <authorList>
            <person name="Valdes J."/>
            <person name="Pedroso I."/>
            <person name="Quatrini R."/>
            <person name="Dodson R.J."/>
            <person name="Tettelin H."/>
            <person name="Blake R. II"/>
            <person name="Eisen J.A."/>
            <person name="Holmes D.S."/>
        </authorList>
    </citation>
    <scope>NUCLEOTIDE SEQUENCE [LARGE SCALE GENOMIC DNA]</scope>
    <source>
        <strain>ATCC 23270 / DSM 14882 / CIP 104768 / NCIMB 8455</strain>
    </source>
</reference>
<evidence type="ECO:0000255" key="1">
    <source>
        <dbReference type="HAMAP-Rule" id="MF_01013"/>
    </source>
</evidence>
<gene>
    <name evidence="1" type="primary">hisF</name>
    <name type="ordered locus">AFE_3046</name>
</gene>
<sequence length="253" mass="26829">MLASRVIPCLDIDHGRVVKGVQFVALRDAGDPVEVAKRYNDEGADEITFLDISASYEERGTLADMVSAVAAQVFIPLTVGGGVRCVEDIRTLLLAGADKVSINSAAVNDPELVRAAARRFGNSCIVVAIDAKRVEDHWEVFTHGGRRGTGLDAVAWAQRMAAYGAGEILLTSMDRDGTGIGFDLALTRAISDAVPVPVIASGGVGEIRHFVEGIQQGRADAVLAASVFHFGQFRISEVKARMAAAGIPVRTTR</sequence>
<proteinExistence type="inferred from homology"/>
<name>HIS6_ACIF2</name>
<feature type="chain" id="PRO_1000134956" description="Imidazole glycerol phosphate synthase subunit HisF">
    <location>
        <begin position="1"/>
        <end position="253"/>
    </location>
</feature>
<feature type="active site" evidence="1">
    <location>
        <position position="11"/>
    </location>
</feature>
<feature type="active site" evidence="1">
    <location>
        <position position="130"/>
    </location>
</feature>